<proteinExistence type="inferred from homology"/>
<accession>P0A7N8</accession>
<accession>P02435</accession>
<name>RL32_SHIFL</name>
<keyword id="KW-1185">Reference proteome</keyword>
<keyword id="KW-0687">Ribonucleoprotein</keyword>
<keyword id="KW-0689">Ribosomal protein</keyword>
<evidence type="ECO:0000250" key="1"/>
<evidence type="ECO:0000256" key="2">
    <source>
        <dbReference type="SAM" id="MobiDB-lite"/>
    </source>
</evidence>
<evidence type="ECO:0000305" key="3"/>
<comment type="similarity">
    <text evidence="3">Belongs to the bacterial ribosomal protein bL32 family.</text>
</comment>
<sequence>MAVQQNKPTRSKRGMRRSHDALTAVTSLSVDKTSGEKHLRHHITADGYYRGRKVIAK</sequence>
<protein>
    <recommendedName>
        <fullName evidence="3">Large ribosomal subunit protein bL32</fullName>
    </recommendedName>
    <alternativeName>
        <fullName>50S ribosomal protein L32</fullName>
    </alternativeName>
</protein>
<feature type="initiator methionine" description="Removed" evidence="1">
    <location>
        <position position="1"/>
    </location>
</feature>
<feature type="chain" id="PRO_0000172401" description="Large ribosomal subunit protein bL32">
    <location>
        <begin position="2"/>
        <end position="57"/>
    </location>
</feature>
<feature type="region of interest" description="Disordered" evidence="2">
    <location>
        <begin position="1"/>
        <end position="38"/>
    </location>
</feature>
<gene>
    <name type="primary">rpmF</name>
    <name type="ordered locus">SF1093</name>
    <name type="ordered locus">S1173</name>
</gene>
<organism>
    <name type="scientific">Shigella flexneri</name>
    <dbReference type="NCBI Taxonomy" id="623"/>
    <lineage>
        <taxon>Bacteria</taxon>
        <taxon>Pseudomonadati</taxon>
        <taxon>Pseudomonadota</taxon>
        <taxon>Gammaproteobacteria</taxon>
        <taxon>Enterobacterales</taxon>
        <taxon>Enterobacteriaceae</taxon>
        <taxon>Shigella</taxon>
    </lineage>
</organism>
<dbReference type="EMBL" id="AE005674">
    <property type="protein sequence ID" value="AAN42712.1"/>
    <property type="molecule type" value="Genomic_DNA"/>
</dbReference>
<dbReference type="EMBL" id="AE014073">
    <property type="protein sequence ID" value="AAP16600.1"/>
    <property type="molecule type" value="Genomic_DNA"/>
</dbReference>
<dbReference type="RefSeq" id="NP_707005.1">
    <property type="nucleotide sequence ID" value="NC_004337.2"/>
</dbReference>
<dbReference type="RefSeq" id="WP_000290727.1">
    <property type="nucleotide sequence ID" value="NZ_WPGW01000001.1"/>
</dbReference>
<dbReference type="SMR" id="P0A7N8"/>
<dbReference type="STRING" id="198214.SF1093"/>
<dbReference type="PaxDb" id="198214-SF1093"/>
<dbReference type="GeneID" id="1024049"/>
<dbReference type="GeneID" id="93776319"/>
<dbReference type="KEGG" id="sfl:SF1093"/>
<dbReference type="KEGG" id="sfx:S1173"/>
<dbReference type="PATRIC" id="fig|198214.7.peg.1281"/>
<dbReference type="HOGENOM" id="CLU_129084_2_1_6"/>
<dbReference type="Proteomes" id="UP000001006">
    <property type="component" value="Chromosome"/>
</dbReference>
<dbReference type="Proteomes" id="UP000002673">
    <property type="component" value="Chromosome"/>
</dbReference>
<dbReference type="GO" id="GO:0015934">
    <property type="term" value="C:large ribosomal subunit"/>
    <property type="evidence" value="ECO:0007669"/>
    <property type="project" value="InterPro"/>
</dbReference>
<dbReference type="GO" id="GO:0003735">
    <property type="term" value="F:structural constituent of ribosome"/>
    <property type="evidence" value="ECO:0007669"/>
    <property type="project" value="InterPro"/>
</dbReference>
<dbReference type="GO" id="GO:0006412">
    <property type="term" value="P:translation"/>
    <property type="evidence" value="ECO:0007669"/>
    <property type="project" value="UniProtKB-UniRule"/>
</dbReference>
<dbReference type="HAMAP" id="MF_00340">
    <property type="entry name" value="Ribosomal_bL32"/>
    <property type="match status" value="1"/>
</dbReference>
<dbReference type="InterPro" id="IPR002677">
    <property type="entry name" value="Ribosomal_bL32"/>
</dbReference>
<dbReference type="InterPro" id="IPR044957">
    <property type="entry name" value="Ribosomal_bL32_bact"/>
</dbReference>
<dbReference type="InterPro" id="IPR011332">
    <property type="entry name" value="Ribosomal_zn-bd"/>
</dbReference>
<dbReference type="NCBIfam" id="TIGR01031">
    <property type="entry name" value="rpmF_bact"/>
    <property type="match status" value="1"/>
</dbReference>
<dbReference type="PANTHER" id="PTHR35534">
    <property type="entry name" value="50S RIBOSOMAL PROTEIN L32"/>
    <property type="match status" value="1"/>
</dbReference>
<dbReference type="PANTHER" id="PTHR35534:SF1">
    <property type="entry name" value="LARGE RIBOSOMAL SUBUNIT PROTEIN BL32"/>
    <property type="match status" value="1"/>
</dbReference>
<dbReference type="Pfam" id="PF01783">
    <property type="entry name" value="Ribosomal_L32p"/>
    <property type="match status" value="1"/>
</dbReference>
<dbReference type="SUPFAM" id="SSF57829">
    <property type="entry name" value="Zn-binding ribosomal proteins"/>
    <property type="match status" value="1"/>
</dbReference>
<reference key="1">
    <citation type="journal article" date="2002" name="Nucleic Acids Res.">
        <title>Genome sequence of Shigella flexneri 2a: insights into pathogenicity through comparison with genomes of Escherichia coli K12 and O157.</title>
        <authorList>
            <person name="Jin Q."/>
            <person name="Yuan Z."/>
            <person name="Xu J."/>
            <person name="Wang Y."/>
            <person name="Shen Y."/>
            <person name="Lu W."/>
            <person name="Wang J."/>
            <person name="Liu H."/>
            <person name="Yang J."/>
            <person name="Yang F."/>
            <person name="Zhang X."/>
            <person name="Zhang J."/>
            <person name="Yang G."/>
            <person name="Wu H."/>
            <person name="Qu D."/>
            <person name="Dong J."/>
            <person name="Sun L."/>
            <person name="Xue Y."/>
            <person name="Zhao A."/>
            <person name="Gao Y."/>
            <person name="Zhu J."/>
            <person name="Kan B."/>
            <person name="Ding K."/>
            <person name="Chen S."/>
            <person name="Cheng H."/>
            <person name="Yao Z."/>
            <person name="He B."/>
            <person name="Chen R."/>
            <person name="Ma D."/>
            <person name="Qiang B."/>
            <person name="Wen Y."/>
            <person name="Hou Y."/>
            <person name="Yu J."/>
        </authorList>
    </citation>
    <scope>NUCLEOTIDE SEQUENCE [LARGE SCALE GENOMIC DNA]</scope>
    <source>
        <strain>301 / Serotype 2a</strain>
    </source>
</reference>
<reference key="2">
    <citation type="journal article" date="2003" name="Infect. Immun.">
        <title>Complete genome sequence and comparative genomics of Shigella flexneri serotype 2a strain 2457T.</title>
        <authorList>
            <person name="Wei J."/>
            <person name="Goldberg M.B."/>
            <person name="Burland V."/>
            <person name="Venkatesan M.M."/>
            <person name="Deng W."/>
            <person name="Fournier G."/>
            <person name="Mayhew G.F."/>
            <person name="Plunkett G. III"/>
            <person name="Rose D.J."/>
            <person name="Darling A."/>
            <person name="Mau B."/>
            <person name="Perna N.T."/>
            <person name="Payne S.M."/>
            <person name="Runyen-Janecky L.J."/>
            <person name="Zhou S."/>
            <person name="Schwartz D.C."/>
            <person name="Blattner F.R."/>
        </authorList>
    </citation>
    <scope>NUCLEOTIDE SEQUENCE [LARGE SCALE GENOMIC DNA]</scope>
    <source>
        <strain>ATCC 700930 / 2457T / Serotype 2a</strain>
    </source>
</reference>